<reference key="1">
    <citation type="journal article" date="2008" name="PLoS Genet.">
        <title>Genomic islands in the pathogenic filamentous fungus Aspergillus fumigatus.</title>
        <authorList>
            <person name="Fedorova N.D."/>
            <person name="Khaldi N."/>
            <person name="Joardar V.S."/>
            <person name="Maiti R."/>
            <person name="Amedeo P."/>
            <person name="Anderson M.J."/>
            <person name="Crabtree J."/>
            <person name="Silva J.C."/>
            <person name="Badger J.H."/>
            <person name="Albarraq A."/>
            <person name="Angiuoli S."/>
            <person name="Bussey H."/>
            <person name="Bowyer P."/>
            <person name="Cotty P.J."/>
            <person name="Dyer P.S."/>
            <person name="Egan A."/>
            <person name="Galens K."/>
            <person name="Fraser-Liggett C.M."/>
            <person name="Haas B.J."/>
            <person name="Inman J.M."/>
            <person name="Kent R."/>
            <person name="Lemieux S."/>
            <person name="Malavazi I."/>
            <person name="Orvis J."/>
            <person name="Roemer T."/>
            <person name="Ronning C.M."/>
            <person name="Sundaram J.P."/>
            <person name="Sutton G."/>
            <person name="Turner G."/>
            <person name="Venter J.C."/>
            <person name="White O.R."/>
            <person name="Whitty B.R."/>
            <person name="Youngman P."/>
            <person name="Wolfe K.H."/>
            <person name="Goldman G.H."/>
            <person name="Wortman J.R."/>
            <person name="Jiang B."/>
            <person name="Denning D.W."/>
            <person name="Nierman W.C."/>
        </authorList>
    </citation>
    <scope>NUCLEOTIDE SEQUENCE [LARGE SCALE GENOMIC DNA]</scope>
    <source>
        <strain>ATCC 1020 / DSM 3700 / CBS 544.65 / FGSC A1164 / JCM 1740 / NRRL 181 / WB 181</strain>
    </source>
</reference>
<accession>A1D858</accession>
<feature type="chain" id="PRO_0000283689" description="Sulfate adenylyltransferase">
    <location>
        <begin position="1"/>
        <end position="574"/>
    </location>
</feature>
<feature type="region of interest" description="N-terminal" evidence="1">
    <location>
        <begin position="1"/>
        <end position="169"/>
    </location>
</feature>
<feature type="region of interest" description="Catalytic" evidence="1">
    <location>
        <begin position="170"/>
        <end position="394"/>
    </location>
</feature>
<feature type="region of interest" description="Allosteric regulation domain; adenylyl-sulfate kinase-like" evidence="1">
    <location>
        <begin position="395"/>
        <end position="574"/>
    </location>
</feature>
<feature type="active site" evidence="1">
    <location>
        <position position="198"/>
    </location>
</feature>
<feature type="active site" evidence="1">
    <location>
        <position position="199"/>
    </location>
</feature>
<feature type="active site" evidence="1">
    <location>
        <position position="200"/>
    </location>
</feature>
<feature type="binding site" evidence="1">
    <location>
        <begin position="197"/>
        <end position="200"/>
    </location>
    <ligand>
        <name>ATP</name>
        <dbReference type="ChEBI" id="CHEBI:30616"/>
    </ligand>
</feature>
<feature type="binding site" evidence="1">
    <location>
        <position position="197"/>
    </location>
    <ligand>
        <name>sulfate</name>
        <dbReference type="ChEBI" id="CHEBI:16189"/>
    </ligand>
</feature>
<feature type="binding site" evidence="1">
    <location>
        <position position="199"/>
    </location>
    <ligand>
        <name>sulfate</name>
        <dbReference type="ChEBI" id="CHEBI:16189"/>
    </ligand>
</feature>
<feature type="binding site" evidence="1">
    <location>
        <begin position="291"/>
        <end position="294"/>
    </location>
    <ligand>
        <name>ATP</name>
        <dbReference type="ChEBI" id="CHEBI:30616"/>
    </ligand>
</feature>
<feature type="binding site" evidence="1">
    <location>
        <position position="295"/>
    </location>
    <ligand>
        <name>sulfate</name>
        <dbReference type="ChEBI" id="CHEBI:16189"/>
    </ligand>
</feature>
<feature type="binding site" evidence="1">
    <location>
        <position position="333"/>
    </location>
    <ligand>
        <name>ATP</name>
        <dbReference type="ChEBI" id="CHEBI:30616"/>
    </ligand>
</feature>
<feature type="binding site" evidence="1">
    <location>
        <begin position="434"/>
        <end position="437"/>
    </location>
    <ligand>
        <name>3'-phosphoadenylyl sulfate</name>
        <dbReference type="ChEBI" id="CHEBI:58339"/>
        <note>allosteric inhibitor</note>
    </ligand>
</feature>
<feature type="binding site" evidence="1">
    <location>
        <position position="451"/>
    </location>
    <ligand>
        <name>3'-phosphoadenylyl sulfate</name>
        <dbReference type="ChEBI" id="CHEBI:58339"/>
        <note>allosteric inhibitor</note>
    </ligand>
</feature>
<feature type="binding site" evidence="1">
    <location>
        <begin position="477"/>
        <end position="478"/>
    </location>
    <ligand>
        <name>3'-phosphoadenylyl sulfate</name>
        <dbReference type="ChEBI" id="CHEBI:58339"/>
        <note>allosteric inhibitor</note>
    </ligand>
</feature>
<feature type="binding site" evidence="1">
    <location>
        <position position="516"/>
    </location>
    <ligand>
        <name>3'-phosphoadenylyl sulfate</name>
        <dbReference type="ChEBI" id="CHEBI:58339"/>
        <note>allosteric inhibitor</note>
    </ligand>
</feature>
<feature type="site" description="Transition state stabilizer" evidence="1">
    <location>
        <position position="203"/>
    </location>
</feature>
<feature type="site" description="Transition state stabilizer" evidence="1">
    <location>
        <position position="206"/>
    </location>
</feature>
<feature type="site" description="Induces change in substrate recognition on ATP binding" evidence="1">
    <location>
        <position position="330"/>
    </location>
</feature>
<gene>
    <name evidence="1" type="primary">met3</name>
    <name type="ORF">NFIA_070730</name>
</gene>
<sequence>MANPPHGGVLKDLLARDAPRHDELEIEAEQLPAIVLTERQLCDLELIMNGGFSPLEGFMNQKDYDSVCENVRLADGNLFSMPITLDVSQAVIDDGKLKPGSRVTLRDFRDDRNLAILTIDDIYRPDKAKEAKLVFGGDEEHPAIKYLYNKVQEFYVGGKIEAINKLNHYDYVALRYTPAELRVHFDKLGWNRVVAFQTRNPMHRAHRELTVRAARARQANVLIHPVVGLTKPGDIDHFTRVRAYQALLPRYPNGMAVLGLLGLAMRMGGPREAIWHAIIRKNHGATHFIVGRDHAGPGKNSKGQEFYGPYDAQHAVEKYREELGIEVVEFQQVTYLPDTDEYKPKDEVPAGVKTLDISGTELRNRLRTGAPIPEWFSYPEVVKILRESSPPRHTQGFTIFLTGYMNSGKDAIARALQVTLNQQGGRSVSLLLGDTVRHELSSELGFSREDRHTNIQRIAFVAGELTRAGAAVIASPIAPYEESRNAARDAVTQAGGNFFLVHVATPLEYCEKTDKRGIYAKARRGEIKGFTGVDDPYETPSKADLTVDVSKQTVRSIVHEIILMLETEGFFDRS</sequence>
<protein>
    <recommendedName>
        <fullName evidence="1">Sulfate adenylyltransferase</fullName>
        <ecNumber evidence="1">2.7.7.4</ecNumber>
    </recommendedName>
    <alternativeName>
        <fullName evidence="1">ATP-sulfurylase</fullName>
    </alternativeName>
    <alternativeName>
        <fullName evidence="1">Sulfate adenylate transferase</fullName>
        <shortName evidence="1">SAT</shortName>
    </alternativeName>
</protein>
<keyword id="KW-0021">Allosteric enzyme</keyword>
<keyword id="KW-0028">Amino-acid biosynthesis</keyword>
<keyword id="KW-0067">ATP-binding</keyword>
<keyword id="KW-0198">Cysteine biosynthesis</keyword>
<keyword id="KW-0963">Cytoplasm</keyword>
<keyword id="KW-0486">Methionine biosynthesis</keyword>
<keyword id="KW-0547">Nucleotide-binding</keyword>
<keyword id="KW-0548">Nucleotidyltransferase</keyword>
<keyword id="KW-1185">Reference proteome</keyword>
<keyword id="KW-0808">Transferase</keyword>
<organism>
    <name type="scientific">Neosartorya fischeri (strain ATCC 1020 / DSM 3700 / CBS 544.65 / FGSC A1164 / JCM 1740 / NRRL 181 / WB 181)</name>
    <name type="common">Aspergillus fischerianus</name>
    <dbReference type="NCBI Taxonomy" id="331117"/>
    <lineage>
        <taxon>Eukaryota</taxon>
        <taxon>Fungi</taxon>
        <taxon>Dikarya</taxon>
        <taxon>Ascomycota</taxon>
        <taxon>Pezizomycotina</taxon>
        <taxon>Eurotiomycetes</taxon>
        <taxon>Eurotiomycetidae</taxon>
        <taxon>Eurotiales</taxon>
        <taxon>Aspergillaceae</taxon>
        <taxon>Aspergillus</taxon>
        <taxon>Aspergillus subgen. Fumigati</taxon>
    </lineage>
</organism>
<comment type="function">
    <text evidence="1">Catalyzes the first intracellular reaction of sulfate assimilation, forming adenosine-5'-phosphosulfate (APS) from inorganic sulfate and ATP. Plays an important role in sulfate activation as a component of the biosynthesis pathway of sulfur-containing amino acids.</text>
</comment>
<comment type="catalytic activity">
    <reaction evidence="1">
        <text>sulfate + ATP + H(+) = adenosine 5'-phosphosulfate + diphosphate</text>
        <dbReference type="Rhea" id="RHEA:18133"/>
        <dbReference type="ChEBI" id="CHEBI:15378"/>
        <dbReference type="ChEBI" id="CHEBI:16189"/>
        <dbReference type="ChEBI" id="CHEBI:30616"/>
        <dbReference type="ChEBI" id="CHEBI:33019"/>
        <dbReference type="ChEBI" id="CHEBI:58243"/>
        <dbReference type="EC" id="2.7.7.4"/>
    </reaction>
</comment>
<comment type="activity regulation">
    <text evidence="1">Allosterically inhibited by 3'-phosphoadenosine 5'-phosphosulfate (PAPS).</text>
</comment>
<comment type="pathway">
    <text evidence="1">Sulfur metabolism; hydrogen sulfide biosynthesis; sulfite from sulfate: step 1/3.</text>
</comment>
<comment type="subunit">
    <text evidence="1">Homohexamer. Dimer of trimers.</text>
</comment>
<comment type="subcellular location">
    <subcellularLocation>
        <location evidence="1">Cytoplasm</location>
    </subcellularLocation>
</comment>
<comment type="domain">
    <text evidence="1">The adenylyl-sulfate kinase (APS kinase) is non-functional. It is involved in allosteric regulation by PAPS. PAPS binding induces a large rotational rearrangement of domains lowering the substrate affinity of the enzyme.</text>
</comment>
<comment type="similarity">
    <text evidence="1">In the N-terminal section; belongs to the sulfate adenylyltransferase family.</text>
</comment>
<comment type="similarity">
    <text evidence="1">In the C-terminal section; belongs to the APS kinase family.</text>
</comment>
<proteinExistence type="inferred from homology"/>
<evidence type="ECO:0000255" key="1">
    <source>
        <dbReference type="HAMAP-Rule" id="MF_03106"/>
    </source>
</evidence>
<name>MET3_NEOFI</name>
<dbReference type="EC" id="2.7.7.4" evidence="1"/>
<dbReference type="EMBL" id="DS027690">
    <property type="protein sequence ID" value="EAW21902.1"/>
    <property type="molecule type" value="Genomic_DNA"/>
</dbReference>
<dbReference type="RefSeq" id="XP_001263799.1">
    <property type="nucleotide sequence ID" value="XM_001263798.1"/>
</dbReference>
<dbReference type="SMR" id="A1D858"/>
<dbReference type="STRING" id="331117.A1D858"/>
<dbReference type="EnsemblFungi" id="EAW21902">
    <property type="protein sequence ID" value="EAW21902"/>
    <property type="gene ID" value="NFIA_070730"/>
</dbReference>
<dbReference type="GeneID" id="4590445"/>
<dbReference type="KEGG" id="nfi:NFIA_070730"/>
<dbReference type="VEuPathDB" id="FungiDB:NFIA_070730"/>
<dbReference type="eggNOG" id="KOG0636">
    <property type="taxonomic scope" value="Eukaryota"/>
</dbReference>
<dbReference type="HOGENOM" id="CLU_022950_0_0_1"/>
<dbReference type="OMA" id="MEMRYAG"/>
<dbReference type="OrthoDB" id="468at2759"/>
<dbReference type="UniPathway" id="UPA00140">
    <property type="reaction ID" value="UER00204"/>
</dbReference>
<dbReference type="Proteomes" id="UP000006702">
    <property type="component" value="Unassembled WGS sequence"/>
</dbReference>
<dbReference type="GO" id="GO:0005737">
    <property type="term" value="C:cytoplasm"/>
    <property type="evidence" value="ECO:0007669"/>
    <property type="project" value="UniProtKB-SubCell"/>
</dbReference>
<dbReference type="GO" id="GO:0004020">
    <property type="term" value="F:adenylylsulfate kinase activity"/>
    <property type="evidence" value="ECO:0007669"/>
    <property type="project" value="InterPro"/>
</dbReference>
<dbReference type="GO" id="GO:0005524">
    <property type="term" value="F:ATP binding"/>
    <property type="evidence" value="ECO:0007669"/>
    <property type="project" value="UniProtKB-KW"/>
</dbReference>
<dbReference type="GO" id="GO:0004781">
    <property type="term" value="F:sulfate adenylyltransferase (ATP) activity"/>
    <property type="evidence" value="ECO:0007669"/>
    <property type="project" value="UniProtKB-UniRule"/>
</dbReference>
<dbReference type="GO" id="GO:0019344">
    <property type="term" value="P:cysteine biosynthetic process"/>
    <property type="evidence" value="ECO:0007669"/>
    <property type="project" value="UniProtKB-KW"/>
</dbReference>
<dbReference type="GO" id="GO:0070814">
    <property type="term" value="P:hydrogen sulfide biosynthetic process"/>
    <property type="evidence" value="ECO:0007669"/>
    <property type="project" value="UniProtKB-UniRule"/>
</dbReference>
<dbReference type="GO" id="GO:0009086">
    <property type="term" value="P:methionine biosynthetic process"/>
    <property type="evidence" value="ECO:0007669"/>
    <property type="project" value="UniProtKB-KW"/>
</dbReference>
<dbReference type="GO" id="GO:0010134">
    <property type="term" value="P:sulfate assimilation via adenylyl sulfate reduction"/>
    <property type="evidence" value="ECO:0007669"/>
    <property type="project" value="TreeGrafter"/>
</dbReference>
<dbReference type="GO" id="GO:0019379">
    <property type="term" value="P:sulfate assimilation, phosphoadenylyl sulfate reduction by phosphoadenylyl-sulfate reductase (thioredoxin)"/>
    <property type="evidence" value="ECO:0007669"/>
    <property type="project" value="TreeGrafter"/>
</dbReference>
<dbReference type="CDD" id="cd02027">
    <property type="entry name" value="APSK"/>
    <property type="match status" value="1"/>
</dbReference>
<dbReference type="CDD" id="cd00517">
    <property type="entry name" value="ATPS"/>
    <property type="match status" value="1"/>
</dbReference>
<dbReference type="FunFam" id="3.10.400.10:FF:000003">
    <property type="entry name" value="Sulfate adenylyltransferase"/>
    <property type="match status" value="1"/>
</dbReference>
<dbReference type="FunFam" id="3.40.50.300:FF:000802">
    <property type="entry name" value="Sulfate adenylyltransferase"/>
    <property type="match status" value="1"/>
</dbReference>
<dbReference type="FunFam" id="3.40.50.620:FF:000052">
    <property type="entry name" value="Sulfate adenylyltransferase"/>
    <property type="match status" value="1"/>
</dbReference>
<dbReference type="Gene3D" id="3.40.50.620">
    <property type="entry name" value="HUPs"/>
    <property type="match status" value="1"/>
</dbReference>
<dbReference type="Gene3D" id="3.40.50.300">
    <property type="entry name" value="P-loop containing nucleotide triphosphate hydrolases"/>
    <property type="match status" value="1"/>
</dbReference>
<dbReference type="Gene3D" id="3.10.400.10">
    <property type="entry name" value="Sulfate adenylyltransferase"/>
    <property type="match status" value="1"/>
</dbReference>
<dbReference type="HAMAP" id="MF_03106">
    <property type="entry name" value="Sulf_adenylyltr_euk"/>
    <property type="match status" value="1"/>
</dbReference>
<dbReference type="InterPro" id="IPR002891">
    <property type="entry name" value="APS_kinase"/>
</dbReference>
<dbReference type="InterPro" id="IPR025980">
    <property type="entry name" value="ATP-Sase_PUA-like_dom"/>
</dbReference>
<dbReference type="InterPro" id="IPR027417">
    <property type="entry name" value="P-loop_NTPase"/>
</dbReference>
<dbReference type="InterPro" id="IPR015947">
    <property type="entry name" value="PUA-like_sf"/>
</dbReference>
<dbReference type="InterPro" id="IPR014729">
    <property type="entry name" value="Rossmann-like_a/b/a_fold"/>
</dbReference>
<dbReference type="InterPro" id="IPR027535">
    <property type="entry name" value="Sulf_adenylyltr_euk"/>
</dbReference>
<dbReference type="InterPro" id="IPR050512">
    <property type="entry name" value="Sulf_AdTrans/APS_kinase"/>
</dbReference>
<dbReference type="InterPro" id="IPR024951">
    <property type="entry name" value="Sulfurylase_cat_dom"/>
</dbReference>
<dbReference type="InterPro" id="IPR002650">
    <property type="entry name" value="Sulphate_adenylyltransferase"/>
</dbReference>
<dbReference type="NCBIfam" id="TIGR00455">
    <property type="entry name" value="apsK"/>
    <property type="match status" value="1"/>
</dbReference>
<dbReference type="NCBIfam" id="NF004040">
    <property type="entry name" value="PRK05537.1"/>
    <property type="match status" value="1"/>
</dbReference>
<dbReference type="NCBIfam" id="TIGR00339">
    <property type="entry name" value="sopT"/>
    <property type="match status" value="1"/>
</dbReference>
<dbReference type="PANTHER" id="PTHR42700">
    <property type="entry name" value="SULFATE ADENYLYLTRANSFERASE"/>
    <property type="match status" value="1"/>
</dbReference>
<dbReference type="PANTHER" id="PTHR42700:SF1">
    <property type="entry name" value="SULFATE ADENYLYLTRANSFERASE"/>
    <property type="match status" value="1"/>
</dbReference>
<dbReference type="Pfam" id="PF01583">
    <property type="entry name" value="APS_kinase"/>
    <property type="match status" value="1"/>
</dbReference>
<dbReference type="Pfam" id="PF01747">
    <property type="entry name" value="ATP-sulfurylase"/>
    <property type="match status" value="1"/>
</dbReference>
<dbReference type="Pfam" id="PF14306">
    <property type="entry name" value="PUA_2"/>
    <property type="match status" value="1"/>
</dbReference>
<dbReference type="SUPFAM" id="SSF52374">
    <property type="entry name" value="Nucleotidylyl transferase"/>
    <property type="match status" value="1"/>
</dbReference>
<dbReference type="SUPFAM" id="SSF52540">
    <property type="entry name" value="P-loop containing nucleoside triphosphate hydrolases"/>
    <property type="match status" value="1"/>
</dbReference>
<dbReference type="SUPFAM" id="SSF88697">
    <property type="entry name" value="PUA domain-like"/>
    <property type="match status" value="1"/>
</dbReference>